<gene>
    <name type="primary">EFNB1</name>
</gene>
<reference key="1">
    <citation type="journal article" date="1997" name="Dev. Biol.">
        <title>Reciprocal expression of the Eph receptor Cek5 and its ligand(s) in the early retina.</title>
        <authorList>
            <person name="Holash J.A."/>
            <person name="Soans C."/>
            <person name="Chong L.D."/>
            <person name="Shao H."/>
            <person name="Dixit V.M."/>
            <person name="Pasquale E.B."/>
        </authorList>
    </citation>
    <scope>NUCLEOTIDE SEQUENCE [MRNA]</scope>
</reference>
<name>EFNB1_CHICK</name>
<protein>
    <recommendedName>
        <fullName>Ephrin-B1</fullName>
    </recommendedName>
    <alternativeName>
        <fullName>CEK5 ligand</fullName>
        <shortName>CEK5-L</shortName>
    </alternativeName>
</protein>
<organism>
    <name type="scientific">Gallus gallus</name>
    <name type="common">Chicken</name>
    <dbReference type="NCBI Taxonomy" id="9031"/>
    <lineage>
        <taxon>Eukaryota</taxon>
        <taxon>Metazoa</taxon>
        <taxon>Chordata</taxon>
        <taxon>Craniata</taxon>
        <taxon>Vertebrata</taxon>
        <taxon>Euteleostomi</taxon>
        <taxon>Archelosauria</taxon>
        <taxon>Archosauria</taxon>
        <taxon>Dinosauria</taxon>
        <taxon>Saurischia</taxon>
        <taxon>Theropoda</taxon>
        <taxon>Coelurosauria</taxon>
        <taxon>Aves</taxon>
        <taxon>Neognathae</taxon>
        <taxon>Galloanserae</taxon>
        <taxon>Galliformes</taxon>
        <taxon>Phasianidae</taxon>
        <taxon>Phasianinae</taxon>
        <taxon>Gallus</taxon>
    </lineage>
</organism>
<evidence type="ECO:0000250" key="1"/>
<evidence type="ECO:0000255" key="2"/>
<evidence type="ECO:0000255" key="3">
    <source>
        <dbReference type="PROSITE-ProRule" id="PRU00884"/>
    </source>
</evidence>
<evidence type="ECO:0000256" key="4">
    <source>
        <dbReference type="SAM" id="MobiDB-lite"/>
    </source>
</evidence>
<keyword id="KW-0217">Developmental protein</keyword>
<keyword id="KW-0221">Differentiation</keyword>
<keyword id="KW-1015">Disulfide bond</keyword>
<keyword id="KW-0325">Glycoprotein</keyword>
<keyword id="KW-0472">Membrane</keyword>
<keyword id="KW-0524">Neurogenesis</keyword>
<keyword id="KW-0597">Phosphoprotein</keyword>
<keyword id="KW-1185">Reference proteome</keyword>
<keyword id="KW-0732">Signal</keyword>
<keyword id="KW-0812">Transmembrane</keyword>
<keyword id="KW-1133">Transmembrane helix</keyword>
<comment type="function">
    <text evidence="1">Cell surface transmembrane ligand for Eph receptors, a family of receptor tyrosine kinases which are crucial for migration, repulsion and adhesion during neuronal, vascular and epithelial development. Binds promiscuously Eph receptors residing on adjacent cells, leading to contact-dependent bidirectional signaling into neighboring cells. The signaling pathway downstream of the receptor is referred to as forward signaling while the signaling pathway downstream of the ephrin ligand is referred to as reverse signaling (By similarity).</text>
</comment>
<comment type="subunit">
    <text evidence="1">Binds to the receptor tyrosine kinase EPHB2. Interacts with GRIP1 and GRIP2 (By similarity).</text>
</comment>
<comment type="subcellular location">
    <subcellularLocation>
        <location>Membrane</location>
        <topology>Single-pass type I membrane protein</topology>
    </subcellularLocation>
</comment>
<comment type="PTM">
    <text evidence="1">Inducible phosphorylation of tyrosine residues in the cytoplasmic domain.</text>
</comment>
<comment type="similarity">
    <text evidence="3">Belongs to the ephrin family.</text>
</comment>
<dbReference type="EMBL" id="U72394">
    <property type="protein sequence ID" value="AAC07986.1"/>
    <property type="molecule type" value="mRNA"/>
</dbReference>
<dbReference type="RefSeq" id="NP_990366.1">
    <property type="nucleotide sequence ID" value="NM_205035.2"/>
</dbReference>
<dbReference type="SMR" id="O73612"/>
<dbReference type="FunCoup" id="O73612">
    <property type="interactions" value="200"/>
</dbReference>
<dbReference type="STRING" id="9031.ENSGALP00000049528"/>
<dbReference type="GlyCosmos" id="O73612">
    <property type="glycosylation" value="1 site, No reported glycans"/>
</dbReference>
<dbReference type="GlyGen" id="O73612">
    <property type="glycosylation" value="1 site"/>
</dbReference>
<dbReference type="iPTMnet" id="O73612"/>
<dbReference type="PaxDb" id="9031-ENSGALP00000039891"/>
<dbReference type="GeneID" id="395896"/>
<dbReference type="KEGG" id="gga:395896"/>
<dbReference type="CTD" id="1947"/>
<dbReference type="VEuPathDB" id="HostDB:geneid_395896"/>
<dbReference type="eggNOG" id="KOG3858">
    <property type="taxonomic scope" value="Eukaryota"/>
</dbReference>
<dbReference type="InParanoid" id="O73612"/>
<dbReference type="OrthoDB" id="6250301at2759"/>
<dbReference type="PhylomeDB" id="O73612"/>
<dbReference type="PRO" id="PR:O73612"/>
<dbReference type="Proteomes" id="UP000000539">
    <property type="component" value="Unassembled WGS sequence"/>
</dbReference>
<dbReference type="GO" id="GO:0005829">
    <property type="term" value="C:cytosol"/>
    <property type="evidence" value="ECO:0000304"/>
    <property type="project" value="Reactome"/>
</dbReference>
<dbReference type="GO" id="GO:0098978">
    <property type="term" value="C:glutamatergic synapse"/>
    <property type="evidence" value="ECO:0000318"/>
    <property type="project" value="GO_Central"/>
</dbReference>
<dbReference type="GO" id="GO:0005886">
    <property type="term" value="C:plasma membrane"/>
    <property type="evidence" value="ECO:0000318"/>
    <property type="project" value="GO_Central"/>
</dbReference>
<dbReference type="GO" id="GO:0042734">
    <property type="term" value="C:presynaptic membrane"/>
    <property type="evidence" value="ECO:0000318"/>
    <property type="project" value="GO_Central"/>
</dbReference>
<dbReference type="GO" id="GO:0046875">
    <property type="term" value="F:ephrin receptor binding"/>
    <property type="evidence" value="ECO:0000318"/>
    <property type="project" value="GO_Central"/>
</dbReference>
<dbReference type="GO" id="GO:0007411">
    <property type="term" value="P:axon guidance"/>
    <property type="evidence" value="ECO:0000318"/>
    <property type="project" value="GO_Central"/>
</dbReference>
<dbReference type="GO" id="GO:0048013">
    <property type="term" value="P:ephrin receptor signaling pathway"/>
    <property type="evidence" value="ECO:0000318"/>
    <property type="project" value="GO_Central"/>
</dbReference>
<dbReference type="CDD" id="cd10426">
    <property type="entry name" value="Ephrin-B_Ectodomain"/>
    <property type="match status" value="1"/>
</dbReference>
<dbReference type="FunFam" id="2.60.40.420:FF:000027">
    <property type="entry name" value="ephrin-B1"/>
    <property type="match status" value="1"/>
</dbReference>
<dbReference type="Gene3D" id="2.60.40.420">
    <property type="entry name" value="Cupredoxins - blue copper proteins"/>
    <property type="match status" value="1"/>
</dbReference>
<dbReference type="InterPro" id="IPR008972">
    <property type="entry name" value="Cupredoxin"/>
</dbReference>
<dbReference type="InterPro" id="IPR031328">
    <property type="entry name" value="Ephrin"/>
</dbReference>
<dbReference type="InterPro" id="IPR034255">
    <property type="entry name" value="Ephrin-B_Ecto"/>
</dbReference>
<dbReference type="InterPro" id="IPR019765">
    <property type="entry name" value="Ephrin_CS"/>
</dbReference>
<dbReference type="InterPro" id="IPR001799">
    <property type="entry name" value="Ephrin_RBD"/>
</dbReference>
<dbReference type="PANTHER" id="PTHR11304">
    <property type="entry name" value="EPHRIN"/>
    <property type="match status" value="1"/>
</dbReference>
<dbReference type="PANTHER" id="PTHR11304:SF17">
    <property type="entry name" value="EPHRIN-B1"/>
    <property type="match status" value="1"/>
</dbReference>
<dbReference type="Pfam" id="PF00812">
    <property type="entry name" value="Ephrin"/>
    <property type="match status" value="1"/>
</dbReference>
<dbReference type="PRINTS" id="PR01347">
    <property type="entry name" value="EPHRIN"/>
</dbReference>
<dbReference type="SUPFAM" id="SSF49503">
    <property type="entry name" value="Cupredoxins"/>
    <property type="match status" value="1"/>
</dbReference>
<dbReference type="PROSITE" id="PS01299">
    <property type="entry name" value="EPHRIN_RBD_1"/>
    <property type="match status" value="1"/>
</dbReference>
<dbReference type="PROSITE" id="PS51551">
    <property type="entry name" value="EPHRIN_RBD_2"/>
    <property type="match status" value="1"/>
</dbReference>
<feature type="signal peptide" evidence="2">
    <location>
        <begin position="1"/>
        <end position="25"/>
    </location>
</feature>
<feature type="chain" id="PRO_0000008390" description="Ephrin-B1">
    <location>
        <begin position="26"/>
        <end position="334"/>
    </location>
</feature>
<feature type="topological domain" description="Extracellular" evidence="2">
    <location>
        <begin position="26"/>
        <end position="231"/>
    </location>
</feature>
<feature type="transmembrane region" description="Helical" evidence="2">
    <location>
        <begin position="232"/>
        <end position="252"/>
    </location>
</feature>
<feature type="topological domain" description="Cytoplasmic" evidence="2">
    <location>
        <begin position="253"/>
        <end position="334"/>
    </location>
</feature>
<feature type="domain" description="Ephrin RBD" evidence="3">
    <location>
        <begin position="26"/>
        <end position="160"/>
    </location>
</feature>
<feature type="region of interest" description="Disordered" evidence="4">
    <location>
        <begin position="175"/>
        <end position="218"/>
    </location>
</feature>
<feature type="short sequence motif" description="PDZ-binding" evidence="2">
    <location>
        <begin position="332"/>
        <end position="334"/>
    </location>
</feature>
<feature type="compositionally biased region" description="Polar residues" evidence="4">
    <location>
        <begin position="207"/>
        <end position="218"/>
    </location>
</feature>
<feature type="glycosylation site" description="N-linked (GlcNAc...) asparagine" evidence="2">
    <location>
        <position position="135"/>
    </location>
</feature>
<feature type="disulfide bond" evidence="3">
    <location>
        <begin position="60"/>
        <end position="97"/>
    </location>
</feature>
<feature type="disulfide bond" evidence="3">
    <location>
        <begin position="85"/>
        <end position="149"/>
    </location>
</feature>
<accession>O73612</accession>
<proteinExistence type="evidence at transcript level"/>
<sequence>MARPRGGRWLLGVLLALCRLAAPLAKSLEPVSWSAGNPKFMSGKGLVIYPEIGDKLDIICPKAEPSKPYDYYKLYLVKKDQADACSTVMDPNVLVTCNRPEQEIRFTIKFQEFSPNYMGLEFKRQQDYFITSTSNGTLDGLENREGGVCQTRSMKIVMKVGQDPNAVIPEQLTTSRPSKEADNTVKIVTQSPRHKVPTVEEPGKPGSVNQNGQETQGPSDGFLSSKVAVFAAIGAGCVIFILIIIFLVVLLIKIRKRHRKHTQQRAAALSLSTLASPKCSGNAGSEPSDIIIPLRTTENNYCPHYEKVSGDYGHPVYIVQEMPPQSPANIYYKV</sequence>